<protein>
    <recommendedName>
        <fullName evidence="1">Tryptophan synthase alpha chain</fullName>
        <ecNumber evidence="1">4.2.1.20</ecNumber>
    </recommendedName>
</protein>
<evidence type="ECO:0000255" key="1">
    <source>
        <dbReference type="HAMAP-Rule" id="MF_00131"/>
    </source>
</evidence>
<proteinExistence type="inferred from homology"/>
<accession>Q2P0U3</accession>
<sequence length="268" mass="28223">MRRIDFRFAELRANGRKALIPFITAGDPSLEATVPVMHALVRAGADVIELGVPFSDPMADGPTIQRSSERALGRGAGLAYVLEAVHEFRREDAATPVVLMGYLNPIEIHGTRRFAEAAVAAGVDGLLLVDLPPEEADETRAIFTEVGLALIALASPTTSEQRLDMLCSTAQGYLYYVSFAGVTGASNLLDTHAASDRLRQLRQRAGAPVVAGFGIKDAASAAAMAVDADGVVVGSALVAALAEADDVRSARERAEAFLAPLRQALDQA</sequence>
<comment type="function">
    <text evidence="1">The alpha subunit is responsible for the aldol cleavage of indoleglycerol phosphate to indole and glyceraldehyde 3-phosphate.</text>
</comment>
<comment type="catalytic activity">
    <reaction evidence="1">
        <text>(1S,2R)-1-C-(indol-3-yl)glycerol 3-phosphate + L-serine = D-glyceraldehyde 3-phosphate + L-tryptophan + H2O</text>
        <dbReference type="Rhea" id="RHEA:10532"/>
        <dbReference type="ChEBI" id="CHEBI:15377"/>
        <dbReference type="ChEBI" id="CHEBI:33384"/>
        <dbReference type="ChEBI" id="CHEBI:57912"/>
        <dbReference type="ChEBI" id="CHEBI:58866"/>
        <dbReference type="ChEBI" id="CHEBI:59776"/>
        <dbReference type="EC" id="4.2.1.20"/>
    </reaction>
</comment>
<comment type="pathway">
    <text evidence="1">Amino-acid biosynthesis; L-tryptophan biosynthesis; L-tryptophan from chorismate: step 5/5.</text>
</comment>
<comment type="subunit">
    <text evidence="1">Tetramer of two alpha and two beta chains.</text>
</comment>
<comment type="similarity">
    <text evidence="1">Belongs to the TrpA family.</text>
</comment>
<keyword id="KW-0028">Amino-acid biosynthesis</keyword>
<keyword id="KW-0057">Aromatic amino acid biosynthesis</keyword>
<keyword id="KW-0456">Lyase</keyword>
<keyword id="KW-0822">Tryptophan biosynthesis</keyword>
<organism>
    <name type="scientific">Xanthomonas oryzae pv. oryzae (strain MAFF 311018)</name>
    <dbReference type="NCBI Taxonomy" id="342109"/>
    <lineage>
        <taxon>Bacteria</taxon>
        <taxon>Pseudomonadati</taxon>
        <taxon>Pseudomonadota</taxon>
        <taxon>Gammaproteobacteria</taxon>
        <taxon>Lysobacterales</taxon>
        <taxon>Lysobacteraceae</taxon>
        <taxon>Xanthomonas</taxon>
    </lineage>
</organism>
<dbReference type="EC" id="4.2.1.20" evidence="1"/>
<dbReference type="EMBL" id="AP008229">
    <property type="protein sequence ID" value="BAE69834.1"/>
    <property type="molecule type" value="Genomic_DNA"/>
</dbReference>
<dbReference type="RefSeq" id="WP_011409067.1">
    <property type="nucleotide sequence ID" value="NC_007705.1"/>
</dbReference>
<dbReference type="SMR" id="Q2P0U3"/>
<dbReference type="KEGG" id="xom:XOO3079"/>
<dbReference type="HOGENOM" id="CLU_016734_0_0_6"/>
<dbReference type="UniPathway" id="UPA00035">
    <property type="reaction ID" value="UER00044"/>
</dbReference>
<dbReference type="GO" id="GO:0005829">
    <property type="term" value="C:cytosol"/>
    <property type="evidence" value="ECO:0007669"/>
    <property type="project" value="TreeGrafter"/>
</dbReference>
<dbReference type="GO" id="GO:0004834">
    <property type="term" value="F:tryptophan synthase activity"/>
    <property type="evidence" value="ECO:0007669"/>
    <property type="project" value="UniProtKB-UniRule"/>
</dbReference>
<dbReference type="CDD" id="cd04724">
    <property type="entry name" value="Tryptophan_synthase_alpha"/>
    <property type="match status" value="1"/>
</dbReference>
<dbReference type="FunFam" id="3.20.20.70:FF:000037">
    <property type="entry name" value="Tryptophan synthase alpha chain"/>
    <property type="match status" value="1"/>
</dbReference>
<dbReference type="Gene3D" id="3.20.20.70">
    <property type="entry name" value="Aldolase class I"/>
    <property type="match status" value="1"/>
</dbReference>
<dbReference type="HAMAP" id="MF_00131">
    <property type="entry name" value="Trp_synth_alpha"/>
    <property type="match status" value="1"/>
</dbReference>
<dbReference type="InterPro" id="IPR013785">
    <property type="entry name" value="Aldolase_TIM"/>
</dbReference>
<dbReference type="InterPro" id="IPR011060">
    <property type="entry name" value="RibuloseP-bd_barrel"/>
</dbReference>
<dbReference type="InterPro" id="IPR018204">
    <property type="entry name" value="Trp_synthase_alpha_AS"/>
</dbReference>
<dbReference type="InterPro" id="IPR002028">
    <property type="entry name" value="Trp_synthase_suA"/>
</dbReference>
<dbReference type="NCBIfam" id="TIGR00262">
    <property type="entry name" value="trpA"/>
    <property type="match status" value="1"/>
</dbReference>
<dbReference type="PANTHER" id="PTHR43406:SF1">
    <property type="entry name" value="TRYPTOPHAN SYNTHASE ALPHA CHAIN, CHLOROPLASTIC"/>
    <property type="match status" value="1"/>
</dbReference>
<dbReference type="PANTHER" id="PTHR43406">
    <property type="entry name" value="TRYPTOPHAN SYNTHASE, ALPHA CHAIN"/>
    <property type="match status" value="1"/>
</dbReference>
<dbReference type="Pfam" id="PF00290">
    <property type="entry name" value="Trp_syntA"/>
    <property type="match status" value="1"/>
</dbReference>
<dbReference type="SUPFAM" id="SSF51366">
    <property type="entry name" value="Ribulose-phoshate binding barrel"/>
    <property type="match status" value="1"/>
</dbReference>
<dbReference type="PROSITE" id="PS00167">
    <property type="entry name" value="TRP_SYNTHASE_ALPHA"/>
    <property type="match status" value="1"/>
</dbReference>
<reference key="1">
    <citation type="journal article" date="2005" name="Jpn. Agric. Res. Q.">
        <title>Genome sequence of Xanthomonas oryzae pv. oryzae suggests contribution of large numbers of effector genes and insertion sequences to its race diversity.</title>
        <authorList>
            <person name="Ochiai H."/>
            <person name="Inoue Y."/>
            <person name="Takeya M."/>
            <person name="Sasaki A."/>
            <person name="Kaku H."/>
        </authorList>
    </citation>
    <scope>NUCLEOTIDE SEQUENCE [LARGE SCALE GENOMIC DNA]</scope>
    <source>
        <strain>MAFF 311018</strain>
    </source>
</reference>
<gene>
    <name evidence="1" type="primary">trpA</name>
    <name type="ordered locus">XOO3079</name>
</gene>
<name>TRPA_XANOM</name>
<feature type="chain" id="PRO_1000018309" description="Tryptophan synthase alpha chain">
    <location>
        <begin position="1"/>
        <end position="268"/>
    </location>
</feature>
<feature type="active site" description="Proton acceptor" evidence="1">
    <location>
        <position position="49"/>
    </location>
</feature>
<feature type="active site" description="Proton acceptor" evidence="1">
    <location>
        <position position="60"/>
    </location>
</feature>